<feature type="chain" id="PRO_0000415138" description="S-methyl-5'-thioadenosine phosphorylase">
    <location>
        <begin position="1"/>
        <end position="321"/>
    </location>
</feature>
<feature type="binding site" evidence="1">
    <location>
        <position position="30"/>
    </location>
    <ligand>
        <name>phosphate</name>
        <dbReference type="ChEBI" id="CHEBI:43474"/>
    </ligand>
</feature>
<feature type="binding site" evidence="1">
    <location>
        <begin position="73"/>
        <end position="74"/>
    </location>
    <ligand>
        <name>phosphate</name>
        <dbReference type="ChEBI" id="CHEBI:43474"/>
    </ligand>
</feature>
<feature type="binding site" evidence="1">
    <location>
        <begin position="106"/>
        <end position="107"/>
    </location>
    <ligand>
        <name>phosphate</name>
        <dbReference type="ChEBI" id="CHEBI:43474"/>
    </ligand>
</feature>
<feature type="binding site" evidence="1">
    <location>
        <position position="215"/>
    </location>
    <ligand>
        <name>substrate</name>
    </ligand>
</feature>
<feature type="binding site" evidence="1">
    <location>
        <position position="216"/>
    </location>
    <ligand>
        <name>phosphate</name>
        <dbReference type="ChEBI" id="CHEBI:43474"/>
    </ligand>
</feature>
<feature type="binding site" evidence="1">
    <location>
        <begin position="239"/>
        <end position="241"/>
    </location>
    <ligand>
        <name>substrate</name>
    </ligand>
</feature>
<feature type="site" description="Important for substrate specificity" evidence="1">
    <location>
        <position position="197"/>
    </location>
</feature>
<feature type="site" description="Important for substrate specificity" evidence="1">
    <location>
        <position position="252"/>
    </location>
</feature>
<keyword id="KW-0963">Cytoplasm</keyword>
<keyword id="KW-0328">Glycosyltransferase</keyword>
<keyword id="KW-0539">Nucleus</keyword>
<keyword id="KW-0660">Purine salvage</keyword>
<keyword id="KW-1185">Reference proteome</keyword>
<keyword id="KW-0808">Transferase</keyword>
<dbReference type="EC" id="2.4.2.28" evidence="1"/>
<dbReference type="EMBL" id="CR382128">
    <property type="protein sequence ID" value="CAG83090.1"/>
    <property type="molecule type" value="Genomic_DNA"/>
</dbReference>
<dbReference type="RefSeq" id="XP_500839.1">
    <property type="nucleotide sequence ID" value="XM_500839.1"/>
</dbReference>
<dbReference type="SMR" id="Q6CES3"/>
<dbReference type="FunCoup" id="Q6CES3">
    <property type="interactions" value="427"/>
</dbReference>
<dbReference type="STRING" id="284591.Q6CES3"/>
<dbReference type="EnsemblFungi" id="CAG83090">
    <property type="protein sequence ID" value="CAG83090"/>
    <property type="gene ID" value="YALI0_B13420g"/>
</dbReference>
<dbReference type="KEGG" id="yli:2907414"/>
<dbReference type="VEuPathDB" id="FungiDB:YALI0_B13420g"/>
<dbReference type="HOGENOM" id="CLU_054456_0_1_1"/>
<dbReference type="InParanoid" id="Q6CES3"/>
<dbReference type="OMA" id="ADPFCPE"/>
<dbReference type="OrthoDB" id="79039at4891"/>
<dbReference type="UniPathway" id="UPA00904">
    <property type="reaction ID" value="UER00873"/>
</dbReference>
<dbReference type="Proteomes" id="UP000001300">
    <property type="component" value="Chromosome B"/>
</dbReference>
<dbReference type="GO" id="GO:0005829">
    <property type="term" value="C:cytosol"/>
    <property type="evidence" value="ECO:0000318"/>
    <property type="project" value="GO_Central"/>
</dbReference>
<dbReference type="GO" id="GO:0005634">
    <property type="term" value="C:nucleus"/>
    <property type="evidence" value="ECO:0007669"/>
    <property type="project" value="UniProtKB-SubCell"/>
</dbReference>
<dbReference type="GO" id="GO:0017061">
    <property type="term" value="F:S-methyl-5-thioadenosine phosphorylase activity"/>
    <property type="evidence" value="ECO:0000318"/>
    <property type="project" value="GO_Central"/>
</dbReference>
<dbReference type="GO" id="GO:0019509">
    <property type="term" value="P:L-methionine salvage from methylthioadenosine"/>
    <property type="evidence" value="ECO:0000318"/>
    <property type="project" value="GO_Central"/>
</dbReference>
<dbReference type="GO" id="GO:0006166">
    <property type="term" value="P:purine ribonucleoside salvage"/>
    <property type="evidence" value="ECO:0007669"/>
    <property type="project" value="UniProtKB-KW"/>
</dbReference>
<dbReference type="CDD" id="cd09010">
    <property type="entry name" value="MTAP_SsMTAPII_like_MTIP"/>
    <property type="match status" value="1"/>
</dbReference>
<dbReference type="FunFam" id="3.40.50.1580:FF:000008">
    <property type="entry name" value="S-methyl-5'-thioadenosine phosphorylase"/>
    <property type="match status" value="1"/>
</dbReference>
<dbReference type="Gene3D" id="3.40.50.1580">
    <property type="entry name" value="Nucleoside phosphorylase domain"/>
    <property type="match status" value="1"/>
</dbReference>
<dbReference type="HAMAP" id="MF_01963">
    <property type="entry name" value="MTAP"/>
    <property type="match status" value="1"/>
</dbReference>
<dbReference type="InterPro" id="IPR010044">
    <property type="entry name" value="MTAP"/>
</dbReference>
<dbReference type="InterPro" id="IPR000845">
    <property type="entry name" value="Nucleoside_phosphorylase_d"/>
</dbReference>
<dbReference type="InterPro" id="IPR035994">
    <property type="entry name" value="Nucleoside_phosphorylase_sf"/>
</dbReference>
<dbReference type="InterPro" id="IPR018099">
    <property type="entry name" value="Purine_phosphorylase-2_CS"/>
</dbReference>
<dbReference type="NCBIfam" id="TIGR01694">
    <property type="entry name" value="MTAP"/>
    <property type="match status" value="1"/>
</dbReference>
<dbReference type="PANTHER" id="PTHR42679">
    <property type="entry name" value="S-METHYL-5'-THIOADENOSINE PHOSPHORYLASE"/>
    <property type="match status" value="1"/>
</dbReference>
<dbReference type="PANTHER" id="PTHR42679:SF2">
    <property type="entry name" value="S-METHYL-5'-THIOADENOSINE PHOSPHORYLASE"/>
    <property type="match status" value="1"/>
</dbReference>
<dbReference type="Pfam" id="PF01048">
    <property type="entry name" value="PNP_UDP_1"/>
    <property type="match status" value="1"/>
</dbReference>
<dbReference type="SUPFAM" id="SSF53167">
    <property type="entry name" value="Purine and uridine phosphorylases"/>
    <property type="match status" value="1"/>
</dbReference>
<dbReference type="PROSITE" id="PS01240">
    <property type="entry name" value="PNP_MTAP_2"/>
    <property type="match status" value="1"/>
</dbReference>
<protein>
    <recommendedName>
        <fullName evidence="1">S-methyl-5'-thioadenosine phosphorylase</fullName>
        <ecNumber evidence="1">2.4.2.28</ecNumber>
    </recommendedName>
    <alternativeName>
        <fullName evidence="1">5'-methylthioadenosine phosphorylase</fullName>
        <shortName evidence="1">MTA phosphorylase</shortName>
        <shortName evidence="1">MTAP</shortName>
        <shortName evidence="1">MTAPase</shortName>
    </alternativeName>
</protein>
<gene>
    <name evidence="1" type="primary">MEU1</name>
    <name type="ordered locus">YALI0B13420g</name>
</gene>
<comment type="function">
    <text evidence="1">Catalyzes the reversible phosphorylation of S-methyl-5'-thioadenosine (MTA) to adenine and 5-methylthioribose-1-phosphate. Involved in the breakdown of MTA, a major by-product of polyamine biosynthesis. Responsible for the first step in the methionine salvage pathway after MTA has been generated from S-adenosylmethionine. Has broad substrate specificity with 6-aminopurine nucleosides as preferred substrates.</text>
</comment>
<comment type="catalytic activity">
    <reaction evidence="1">
        <text>S-methyl-5'-thioadenosine + phosphate = 5-(methylsulfanyl)-alpha-D-ribose 1-phosphate + adenine</text>
        <dbReference type="Rhea" id="RHEA:11852"/>
        <dbReference type="ChEBI" id="CHEBI:16708"/>
        <dbReference type="ChEBI" id="CHEBI:17509"/>
        <dbReference type="ChEBI" id="CHEBI:43474"/>
        <dbReference type="ChEBI" id="CHEBI:58533"/>
        <dbReference type="EC" id="2.4.2.28"/>
    </reaction>
</comment>
<comment type="pathway">
    <text evidence="1">Amino-acid biosynthesis; L-methionine biosynthesis via salvage pathway; S-methyl-5-thio-alpha-D-ribose 1-phosphate from S-methyl-5'-thioadenosine (phosphorylase route): step 1/1.</text>
</comment>
<comment type="subunit">
    <text evidence="1">Homotrimer.</text>
</comment>
<comment type="subcellular location">
    <subcellularLocation>
        <location evidence="1">Cytoplasm</location>
    </subcellularLocation>
    <subcellularLocation>
        <location evidence="1">Nucleus</location>
    </subcellularLocation>
</comment>
<comment type="similarity">
    <text evidence="1">Belongs to the PNP/MTAP phosphorylase family. MTAP subfamily.</text>
</comment>
<organism>
    <name type="scientific">Yarrowia lipolytica (strain CLIB 122 / E 150)</name>
    <name type="common">Yeast</name>
    <name type="synonym">Candida lipolytica</name>
    <dbReference type="NCBI Taxonomy" id="284591"/>
    <lineage>
        <taxon>Eukaryota</taxon>
        <taxon>Fungi</taxon>
        <taxon>Dikarya</taxon>
        <taxon>Ascomycota</taxon>
        <taxon>Saccharomycotina</taxon>
        <taxon>Dipodascomycetes</taxon>
        <taxon>Dipodascales</taxon>
        <taxon>Dipodascales incertae sedis</taxon>
        <taxon>Yarrowia</taxon>
    </lineage>
</organism>
<name>MTAP_YARLI</name>
<accession>Q6CES3</accession>
<reference key="1">
    <citation type="journal article" date="2004" name="Nature">
        <title>Genome evolution in yeasts.</title>
        <authorList>
            <person name="Dujon B."/>
            <person name="Sherman D."/>
            <person name="Fischer G."/>
            <person name="Durrens P."/>
            <person name="Casaregola S."/>
            <person name="Lafontaine I."/>
            <person name="de Montigny J."/>
            <person name="Marck C."/>
            <person name="Neuveglise C."/>
            <person name="Talla E."/>
            <person name="Goffard N."/>
            <person name="Frangeul L."/>
            <person name="Aigle M."/>
            <person name="Anthouard V."/>
            <person name="Babour A."/>
            <person name="Barbe V."/>
            <person name="Barnay S."/>
            <person name="Blanchin S."/>
            <person name="Beckerich J.-M."/>
            <person name="Beyne E."/>
            <person name="Bleykasten C."/>
            <person name="Boisrame A."/>
            <person name="Boyer J."/>
            <person name="Cattolico L."/>
            <person name="Confanioleri F."/>
            <person name="de Daruvar A."/>
            <person name="Despons L."/>
            <person name="Fabre E."/>
            <person name="Fairhead C."/>
            <person name="Ferry-Dumazet H."/>
            <person name="Groppi A."/>
            <person name="Hantraye F."/>
            <person name="Hennequin C."/>
            <person name="Jauniaux N."/>
            <person name="Joyet P."/>
            <person name="Kachouri R."/>
            <person name="Kerrest A."/>
            <person name="Koszul R."/>
            <person name="Lemaire M."/>
            <person name="Lesur I."/>
            <person name="Ma L."/>
            <person name="Muller H."/>
            <person name="Nicaud J.-M."/>
            <person name="Nikolski M."/>
            <person name="Oztas S."/>
            <person name="Ozier-Kalogeropoulos O."/>
            <person name="Pellenz S."/>
            <person name="Potier S."/>
            <person name="Richard G.-F."/>
            <person name="Straub M.-L."/>
            <person name="Suleau A."/>
            <person name="Swennen D."/>
            <person name="Tekaia F."/>
            <person name="Wesolowski-Louvel M."/>
            <person name="Westhof E."/>
            <person name="Wirth B."/>
            <person name="Zeniou-Meyer M."/>
            <person name="Zivanovic Y."/>
            <person name="Bolotin-Fukuhara M."/>
            <person name="Thierry A."/>
            <person name="Bouchier C."/>
            <person name="Caudron B."/>
            <person name="Scarpelli C."/>
            <person name="Gaillardin C."/>
            <person name="Weissenbach J."/>
            <person name="Wincker P."/>
            <person name="Souciet J.-L."/>
        </authorList>
    </citation>
    <scope>NUCLEOTIDE SEQUENCE [LARGE SCALE GENOMIC DNA]</scope>
    <source>
        <strain>CLIB 122 / E 150</strain>
    </source>
</reference>
<proteinExistence type="inferred from homology"/>
<evidence type="ECO:0000255" key="1">
    <source>
        <dbReference type="HAMAP-Rule" id="MF_03155"/>
    </source>
</evidence>
<sequence>MAFLPNLVATPMSLASSYSKPVTLGIIGGTGLYKLGALTPVAQIDIDTPWGKPSSPITISETKSGFPVAFLARHGVNHDLTPTDVPSRANIAALKKVGVKAIVAFSAVGSLQEEIAPRDFVVPTQIIDRTKGIRPSSFFEKGFVGHVGFGEPFDVALGKLVAEHADKAFDNSKYKIHTKAKAGKDLTLVCMEGPAFSTRAESQLYRSWNGAVINMSAIPESKLAKEAEIAYQMICMSTDYDAWKEDEEPVTVEQVVSNLTANAESATGVVEALLEPLEKALADKSIGYDLDGSMKFAVSTAPAARDATVAKNLDFLHPGYW</sequence>